<feature type="chain" id="PRO_1000140787" description="Small ribosomal subunit protein uS4">
    <location>
        <begin position="1"/>
        <end position="206"/>
    </location>
</feature>
<feature type="domain" description="S4 RNA-binding" evidence="1">
    <location>
        <begin position="96"/>
        <end position="156"/>
    </location>
</feature>
<reference key="1">
    <citation type="journal article" date="2008" name="Genome Res.">
        <title>Comparative genome analysis of Salmonella enteritidis PT4 and Salmonella gallinarum 287/91 provides insights into evolutionary and host adaptation pathways.</title>
        <authorList>
            <person name="Thomson N.R."/>
            <person name="Clayton D.J."/>
            <person name="Windhorst D."/>
            <person name="Vernikos G."/>
            <person name="Davidson S."/>
            <person name="Churcher C."/>
            <person name="Quail M.A."/>
            <person name="Stevens M."/>
            <person name="Jones M.A."/>
            <person name="Watson M."/>
            <person name="Barron A."/>
            <person name="Layton A."/>
            <person name="Pickard D."/>
            <person name="Kingsley R.A."/>
            <person name="Bignell A."/>
            <person name="Clark L."/>
            <person name="Harris B."/>
            <person name="Ormond D."/>
            <person name="Abdellah Z."/>
            <person name="Brooks K."/>
            <person name="Cherevach I."/>
            <person name="Chillingworth T."/>
            <person name="Woodward J."/>
            <person name="Norberczak H."/>
            <person name="Lord A."/>
            <person name="Arrowsmith C."/>
            <person name="Jagels K."/>
            <person name="Moule S."/>
            <person name="Mungall K."/>
            <person name="Saunders M."/>
            <person name="Whitehead S."/>
            <person name="Chabalgoity J.A."/>
            <person name="Maskell D."/>
            <person name="Humphreys T."/>
            <person name="Roberts M."/>
            <person name="Barrow P.A."/>
            <person name="Dougan G."/>
            <person name="Parkhill J."/>
        </authorList>
    </citation>
    <scope>NUCLEOTIDE SEQUENCE [LARGE SCALE GENOMIC DNA]</scope>
    <source>
        <strain>287/91 / NCTC 13346</strain>
    </source>
</reference>
<evidence type="ECO:0000255" key="1">
    <source>
        <dbReference type="HAMAP-Rule" id="MF_01306"/>
    </source>
</evidence>
<evidence type="ECO:0000305" key="2"/>
<gene>
    <name evidence="1" type="primary">rpsD</name>
    <name type="ordered locus">SG4022</name>
</gene>
<comment type="function">
    <text evidence="1">One of the primary rRNA binding proteins, it binds directly to 16S rRNA where it nucleates assembly of the body of the 30S subunit.</text>
</comment>
<comment type="function">
    <text evidence="1">With S5 and S12 plays an important role in translational accuracy.</text>
</comment>
<comment type="subunit">
    <text evidence="1">Part of the 30S ribosomal subunit. Contacts protein S5. The interaction surface between S4 and S5 is involved in control of translational fidelity.</text>
</comment>
<comment type="similarity">
    <text evidence="1">Belongs to the universal ribosomal protein uS4 family.</text>
</comment>
<sequence>MARYLGPKLKLSRREGTDLFLKSGVRAIDTKCKIEQAPGQHGARKPRLSDYGVQLREKQKVRRIYGVLERQFRNYYKEAARLKGNTGENLLALLEGRLDNVVYRMGFGATRAEARQLVSHKAIMVNGRVVNIASYQVSPNDVVSIREKAKKQSRVKAALELAEQREKPTWLEVDAGKMEGTYKRKPERSDLSADINEHLIVELYSK</sequence>
<protein>
    <recommendedName>
        <fullName evidence="1">Small ribosomal subunit protein uS4</fullName>
    </recommendedName>
    <alternativeName>
        <fullName evidence="2">30S ribosomal protein S4</fullName>
    </alternativeName>
</protein>
<dbReference type="EMBL" id="AM933173">
    <property type="protein sequence ID" value="CAR39793.1"/>
    <property type="molecule type" value="Genomic_DNA"/>
</dbReference>
<dbReference type="RefSeq" id="WP_000135226.1">
    <property type="nucleotide sequence ID" value="NC_011274.1"/>
</dbReference>
<dbReference type="SMR" id="B5RH39"/>
<dbReference type="GeneID" id="93035755"/>
<dbReference type="KEGG" id="seg:SG4022"/>
<dbReference type="HOGENOM" id="CLU_092403_0_2_6"/>
<dbReference type="Proteomes" id="UP000008321">
    <property type="component" value="Chromosome"/>
</dbReference>
<dbReference type="GO" id="GO:0015935">
    <property type="term" value="C:small ribosomal subunit"/>
    <property type="evidence" value="ECO:0007669"/>
    <property type="project" value="InterPro"/>
</dbReference>
<dbReference type="GO" id="GO:0019843">
    <property type="term" value="F:rRNA binding"/>
    <property type="evidence" value="ECO:0007669"/>
    <property type="project" value="UniProtKB-UniRule"/>
</dbReference>
<dbReference type="GO" id="GO:0003735">
    <property type="term" value="F:structural constituent of ribosome"/>
    <property type="evidence" value="ECO:0007669"/>
    <property type="project" value="InterPro"/>
</dbReference>
<dbReference type="GO" id="GO:0042274">
    <property type="term" value="P:ribosomal small subunit biogenesis"/>
    <property type="evidence" value="ECO:0007669"/>
    <property type="project" value="TreeGrafter"/>
</dbReference>
<dbReference type="GO" id="GO:0006412">
    <property type="term" value="P:translation"/>
    <property type="evidence" value="ECO:0007669"/>
    <property type="project" value="UniProtKB-UniRule"/>
</dbReference>
<dbReference type="CDD" id="cd00165">
    <property type="entry name" value="S4"/>
    <property type="match status" value="1"/>
</dbReference>
<dbReference type="FunFam" id="1.10.1050.10:FF:000001">
    <property type="entry name" value="30S ribosomal protein S4"/>
    <property type="match status" value="1"/>
</dbReference>
<dbReference type="FunFam" id="3.10.290.10:FF:000001">
    <property type="entry name" value="30S ribosomal protein S4"/>
    <property type="match status" value="1"/>
</dbReference>
<dbReference type="Gene3D" id="1.10.1050.10">
    <property type="entry name" value="Ribosomal Protein S4 Delta 41, Chain A, domain 1"/>
    <property type="match status" value="1"/>
</dbReference>
<dbReference type="Gene3D" id="3.10.290.10">
    <property type="entry name" value="RNA-binding S4 domain"/>
    <property type="match status" value="1"/>
</dbReference>
<dbReference type="HAMAP" id="MF_01306_B">
    <property type="entry name" value="Ribosomal_uS4_B"/>
    <property type="match status" value="1"/>
</dbReference>
<dbReference type="InterPro" id="IPR022801">
    <property type="entry name" value="Ribosomal_uS4"/>
</dbReference>
<dbReference type="InterPro" id="IPR005709">
    <property type="entry name" value="Ribosomal_uS4_bac-type"/>
</dbReference>
<dbReference type="InterPro" id="IPR018079">
    <property type="entry name" value="Ribosomal_uS4_CS"/>
</dbReference>
<dbReference type="InterPro" id="IPR001912">
    <property type="entry name" value="Ribosomal_uS4_N"/>
</dbReference>
<dbReference type="InterPro" id="IPR002942">
    <property type="entry name" value="S4_RNA-bd"/>
</dbReference>
<dbReference type="InterPro" id="IPR036986">
    <property type="entry name" value="S4_RNA-bd_sf"/>
</dbReference>
<dbReference type="NCBIfam" id="NF003717">
    <property type="entry name" value="PRK05327.1"/>
    <property type="match status" value="1"/>
</dbReference>
<dbReference type="NCBIfam" id="TIGR01017">
    <property type="entry name" value="rpsD_bact"/>
    <property type="match status" value="1"/>
</dbReference>
<dbReference type="PANTHER" id="PTHR11831">
    <property type="entry name" value="30S 40S RIBOSOMAL PROTEIN"/>
    <property type="match status" value="1"/>
</dbReference>
<dbReference type="PANTHER" id="PTHR11831:SF4">
    <property type="entry name" value="SMALL RIBOSOMAL SUBUNIT PROTEIN US4M"/>
    <property type="match status" value="1"/>
</dbReference>
<dbReference type="Pfam" id="PF00163">
    <property type="entry name" value="Ribosomal_S4"/>
    <property type="match status" value="1"/>
</dbReference>
<dbReference type="Pfam" id="PF01479">
    <property type="entry name" value="S4"/>
    <property type="match status" value="1"/>
</dbReference>
<dbReference type="SMART" id="SM01390">
    <property type="entry name" value="Ribosomal_S4"/>
    <property type="match status" value="1"/>
</dbReference>
<dbReference type="SMART" id="SM00363">
    <property type="entry name" value="S4"/>
    <property type="match status" value="1"/>
</dbReference>
<dbReference type="SUPFAM" id="SSF55174">
    <property type="entry name" value="Alpha-L RNA-binding motif"/>
    <property type="match status" value="1"/>
</dbReference>
<dbReference type="PROSITE" id="PS00632">
    <property type="entry name" value="RIBOSOMAL_S4"/>
    <property type="match status" value="1"/>
</dbReference>
<dbReference type="PROSITE" id="PS50889">
    <property type="entry name" value="S4"/>
    <property type="match status" value="1"/>
</dbReference>
<name>RS4_SALG2</name>
<organism>
    <name type="scientific">Salmonella gallinarum (strain 287/91 / NCTC 13346)</name>
    <dbReference type="NCBI Taxonomy" id="550538"/>
    <lineage>
        <taxon>Bacteria</taxon>
        <taxon>Pseudomonadati</taxon>
        <taxon>Pseudomonadota</taxon>
        <taxon>Gammaproteobacteria</taxon>
        <taxon>Enterobacterales</taxon>
        <taxon>Enterobacteriaceae</taxon>
        <taxon>Salmonella</taxon>
    </lineage>
</organism>
<proteinExistence type="inferred from homology"/>
<keyword id="KW-0687">Ribonucleoprotein</keyword>
<keyword id="KW-0689">Ribosomal protein</keyword>
<keyword id="KW-0694">RNA-binding</keyword>
<keyword id="KW-0699">rRNA-binding</keyword>
<accession>B5RH39</accession>